<organism>
    <name type="scientific">Escherichia coli (strain SE11)</name>
    <dbReference type="NCBI Taxonomy" id="409438"/>
    <lineage>
        <taxon>Bacteria</taxon>
        <taxon>Pseudomonadati</taxon>
        <taxon>Pseudomonadota</taxon>
        <taxon>Gammaproteobacteria</taxon>
        <taxon>Enterobacterales</taxon>
        <taxon>Enterobacteriaceae</taxon>
        <taxon>Escherichia</taxon>
    </lineage>
</organism>
<gene>
    <name evidence="1" type="primary">syd</name>
    <name type="ordered locus">ECSE_3053</name>
</gene>
<name>SYDP_ECOSE</name>
<feature type="chain" id="PRO_1000137030" description="Protein Syd">
    <location>
        <begin position="1"/>
        <end position="181"/>
    </location>
</feature>
<proteinExistence type="inferred from homology"/>
<reference key="1">
    <citation type="journal article" date="2008" name="DNA Res.">
        <title>Complete genome sequence and comparative analysis of the wild-type commensal Escherichia coli strain SE11 isolated from a healthy adult.</title>
        <authorList>
            <person name="Oshima K."/>
            <person name="Toh H."/>
            <person name="Ogura Y."/>
            <person name="Sasamoto H."/>
            <person name="Morita H."/>
            <person name="Park S.-H."/>
            <person name="Ooka T."/>
            <person name="Iyoda S."/>
            <person name="Taylor T.D."/>
            <person name="Hayashi T."/>
            <person name="Itoh K."/>
            <person name="Hattori M."/>
        </authorList>
    </citation>
    <scope>NUCLEOTIDE SEQUENCE [LARGE SCALE GENOMIC DNA]</scope>
    <source>
        <strain>SE11</strain>
    </source>
</reference>
<protein>
    <recommendedName>
        <fullName evidence="1">Protein Syd</fullName>
    </recommendedName>
</protein>
<accession>B6I6J1</accession>
<dbReference type="EMBL" id="AP009240">
    <property type="protein sequence ID" value="BAG78577.1"/>
    <property type="molecule type" value="Genomic_DNA"/>
</dbReference>
<dbReference type="RefSeq" id="WP_000342431.1">
    <property type="nucleotide sequence ID" value="NC_011415.1"/>
</dbReference>
<dbReference type="SMR" id="B6I6J1"/>
<dbReference type="GeneID" id="93779205"/>
<dbReference type="KEGG" id="ecy:ECSE_3053"/>
<dbReference type="HOGENOM" id="CLU_121866_0_0_6"/>
<dbReference type="Proteomes" id="UP000008199">
    <property type="component" value="Chromosome"/>
</dbReference>
<dbReference type="GO" id="GO:0009898">
    <property type="term" value="C:cytoplasmic side of plasma membrane"/>
    <property type="evidence" value="ECO:0007669"/>
    <property type="project" value="InterPro"/>
</dbReference>
<dbReference type="CDD" id="cd16323">
    <property type="entry name" value="Syd"/>
    <property type="match status" value="1"/>
</dbReference>
<dbReference type="FunFam" id="3.40.1580.20:FF:000001">
    <property type="entry name" value="Protein Syd"/>
    <property type="match status" value="1"/>
</dbReference>
<dbReference type="Gene3D" id="3.40.1580.20">
    <property type="entry name" value="Syd protein"/>
    <property type="match status" value="1"/>
</dbReference>
<dbReference type="HAMAP" id="MF_01104">
    <property type="entry name" value="Syd"/>
    <property type="match status" value="1"/>
</dbReference>
<dbReference type="InterPro" id="IPR009948">
    <property type="entry name" value="Syd"/>
</dbReference>
<dbReference type="InterPro" id="IPR038228">
    <property type="entry name" value="Syd_sf"/>
</dbReference>
<dbReference type="NCBIfam" id="NF003439">
    <property type="entry name" value="PRK04968.1"/>
    <property type="match status" value="1"/>
</dbReference>
<dbReference type="Pfam" id="PF07348">
    <property type="entry name" value="Syd"/>
    <property type="match status" value="1"/>
</dbReference>
<sequence length="181" mass="20708">MDDLTAQALKDFTARYCDAWHEEHKSWPLSEELYGVPSPCIISTTEDAVYWQPQPFTGEQNVNAVERAFDIVIQPTIHTFYTTQFAGDMHAQFGDIKLTLLQTWSEDDFRRVQENLIGHLVTQKRLKLPPTLFIATLEEELEVISVCNLSGEVCKETLGTRKRTHLASNLAEFLNQLKPLL</sequence>
<comment type="function">
    <text evidence="1">Interacts with the SecY protein in vivo. May bind preferentially to an uncomplexed state of SecY, thus functioning either as a chelating agent for excess SecY in the cell or as a regulatory factor that negatively controls the translocase function.</text>
</comment>
<comment type="subcellular location">
    <subcellularLocation>
        <location evidence="1">Cell inner membrane</location>
        <topology evidence="1">Peripheral membrane protein</topology>
        <orientation evidence="1">Cytoplasmic side</orientation>
    </subcellularLocation>
    <text evidence="1">Loosely associated with the cytoplasmic side of the inner membrane, probably via SecY.</text>
</comment>
<comment type="similarity">
    <text evidence="1">Belongs to the Syd family.</text>
</comment>
<evidence type="ECO:0000255" key="1">
    <source>
        <dbReference type="HAMAP-Rule" id="MF_01104"/>
    </source>
</evidence>
<keyword id="KW-0997">Cell inner membrane</keyword>
<keyword id="KW-1003">Cell membrane</keyword>
<keyword id="KW-0472">Membrane</keyword>